<sequence length="596" mass="69185">MPPRGLELLIAQTILQGFDAQYGRFLEITAGAQHRFEQADWHAVQQAMKSRIHLYDHHVGLVVEQLRCIMEGKATDPDFLLRVKRHYTDLLPDYPRFEIAESFFNSVYCRLYDHRSLTPDRLFIFSSQPERRFRTMPRPLAKNFFPEQGWQPLLTTLLTDLPLRLPWQDLARDVRYIIAHLNETLGPARLAQAHLEMANELFYRNKAAWLVGKLRLPDATLPFLLPVHRSDDGELFVDTCLTGSAGASIVFGFARSYFMVYAPLPAALVEWLREILPGKTTAELYMAIGCQKHAKTESYREYLHYLRHADEQFIEAPGIRGMVMLVFTLPGFDRVFKVIKDRFAPQKEMSEAHVRACYQLVKEHDRVGRMADTQEFENFVIEKRRISPELMALLQQEVGQKLTDMGDKISISHLYIERRMVPLNIWLEQATGQQLRDAIEEYGNAIRQLAAANIFPGDMLFKNFGVTRHGRVVFYDYDEICYMTEVNFRDIPPPRYPEDELSAEPWYSVAPGDVFPEEFRHWLCADPKIGPLFEEMHSDLFSASYWRALQTRIREGYVEDVYAYRRRQRFCVRWKNHNGHPEAAVSAIAPSAVGEG</sequence>
<name>ACEK_CROS8</name>
<dbReference type="EC" id="2.7.11.5" evidence="1"/>
<dbReference type="EC" id="3.1.3.-" evidence="1"/>
<dbReference type="EMBL" id="CP000783">
    <property type="protein sequence ID" value="ABU75360.1"/>
    <property type="molecule type" value="Genomic_DNA"/>
</dbReference>
<dbReference type="RefSeq" id="WP_012123597.1">
    <property type="nucleotide sequence ID" value="NC_009778.1"/>
</dbReference>
<dbReference type="SMR" id="A7MPD7"/>
<dbReference type="KEGG" id="esa:ESA_00055"/>
<dbReference type="PATRIC" id="fig|290339.8.peg.48"/>
<dbReference type="HOGENOM" id="CLU_033804_1_1_6"/>
<dbReference type="Proteomes" id="UP000000260">
    <property type="component" value="Chromosome"/>
</dbReference>
<dbReference type="GO" id="GO:0005737">
    <property type="term" value="C:cytoplasm"/>
    <property type="evidence" value="ECO:0007669"/>
    <property type="project" value="UniProtKB-SubCell"/>
</dbReference>
<dbReference type="GO" id="GO:0008772">
    <property type="term" value="F:[isocitrate dehydrogenase (NADP+)] kinase activity"/>
    <property type="evidence" value="ECO:0007669"/>
    <property type="project" value="UniProtKB-UniRule"/>
</dbReference>
<dbReference type="GO" id="GO:0016208">
    <property type="term" value="F:AMP binding"/>
    <property type="evidence" value="ECO:0007669"/>
    <property type="project" value="TreeGrafter"/>
</dbReference>
<dbReference type="GO" id="GO:0005524">
    <property type="term" value="F:ATP binding"/>
    <property type="evidence" value="ECO:0007669"/>
    <property type="project" value="UniProtKB-UniRule"/>
</dbReference>
<dbReference type="GO" id="GO:0004721">
    <property type="term" value="F:phosphoprotein phosphatase activity"/>
    <property type="evidence" value="ECO:0007669"/>
    <property type="project" value="UniProtKB-KW"/>
</dbReference>
<dbReference type="GO" id="GO:0004674">
    <property type="term" value="F:protein serine/threonine kinase activity"/>
    <property type="evidence" value="ECO:0007669"/>
    <property type="project" value="UniProtKB-KW"/>
</dbReference>
<dbReference type="GO" id="GO:0006006">
    <property type="term" value="P:glucose metabolic process"/>
    <property type="evidence" value="ECO:0007669"/>
    <property type="project" value="InterPro"/>
</dbReference>
<dbReference type="GO" id="GO:0006097">
    <property type="term" value="P:glyoxylate cycle"/>
    <property type="evidence" value="ECO:0007669"/>
    <property type="project" value="UniProtKB-UniRule"/>
</dbReference>
<dbReference type="GO" id="GO:0006099">
    <property type="term" value="P:tricarboxylic acid cycle"/>
    <property type="evidence" value="ECO:0007669"/>
    <property type="project" value="UniProtKB-UniRule"/>
</dbReference>
<dbReference type="HAMAP" id="MF_00747">
    <property type="entry name" value="AceK"/>
    <property type="match status" value="1"/>
</dbReference>
<dbReference type="InterPro" id="IPR046855">
    <property type="entry name" value="AceK_kinase"/>
</dbReference>
<dbReference type="InterPro" id="IPR046854">
    <property type="entry name" value="AceK_regulatory"/>
</dbReference>
<dbReference type="InterPro" id="IPR010452">
    <property type="entry name" value="Isocitrate_DH_AceK"/>
</dbReference>
<dbReference type="NCBIfam" id="NF002804">
    <property type="entry name" value="PRK02946.1"/>
    <property type="match status" value="1"/>
</dbReference>
<dbReference type="PANTHER" id="PTHR39559">
    <property type="match status" value="1"/>
</dbReference>
<dbReference type="PANTHER" id="PTHR39559:SF1">
    <property type="entry name" value="ISOCITRATE DEHYDROGENASE KINASE_PHOSPHATASE"/>
    <property type="match status" value="1"/>
</dbReference>
<dbReference type="Pfam" id="PF06315">
    <property type="entry name" value="AceK_kinase"/>
    <property type="match status" value="1"/>
</dbReference>
<dbReference type="Pfam" id="PF20423">
    <property type="entry name" value="AceK_regulatory"/>
    <property type="match status" value="1"/>
</dbReference>
<dbReference type="PIRSF" id="PIRSF000719">
    <property type="entry name" value="AceK"/>
    <property type="match status" value="1"/>
</dbReference>
<evidence type="ECO:0000255" key="1">
    <source>
        <dbReference type="HAMAP-Rule" id="MF_00747"/>
    </source>
</evidence>
<accession>A7MPD7</accession>
<keyword id="KW-0067">ATP-binding</keyword>
<keyword id="KW-0963">Cytoplasm</keyword>
<keyword id="KW-0329">Glyoxylate bypass</keyword>
<keyword id="KW-0378">Hydrolase</keyword>
<keyword id="KW-0418">Kinase</keyword>
<keyword id="KW-0547">Nucleotide-binding</keyword>
<keyword id="KW-0904">Protein phosphatase</keyword>
<keyword id="KW-1185">Reference proteome</keyword>
<keyword id="KW-0723">Serine/threonine-protein kinase</keyword>
<keyword id="KW-0808">Transferase</keyword>
<keyword id="KW-0816">Tricarboxylic acid cycle</keyword>
<gene>
    <name evidence="1" type="primary">aceK</name>
    <name type="ordered locus">ESA_00055</name>
</gene>
<protein>
    <recommendedName>
        <fullName evidence="1">Isocitrate dehydrogenase kinase/phosphatase</fullName>
        <shortName evidence="1">IDH kinase/phosphatase</shortName>
        <shortName evidence="1">IDHK/P</shortName>
        <ecNumber evidence="1">2.7.11.5</ecNumber>
        <ecNumber evidence="1">3.1.3.-</ecNumber>
    </recommendedName>
</protein>
<reference key="1">
    <citation type="journal article" date="2010" name="PLoS ONE">
        <title>Genome sequence of Cronobacter sakazakii BAA-894 and comparative genomic hybridization analysis with other Cronobacter species.</title>
        <authorList>
            <person name="Kucerova E."/>
            <person name="Clifton S.W."/>
            <person name="Xia X.Q."/>
            <person name="Long F."/>
            <person name="Porwollik S."/>
            <person name="Fulton L."/>
            <person name="Fronick C."/>
            <person name="Minx P."/>
            <person name="Kyung K."/>
            <person name="Warren W."/>
            <person name="Fulton R."/>
            <person name="Feng D."/>
            <person name="Wollam A."/>
            <person name="Shah N."/>
            <person name="Bhonagiri V."/>
            <person name="Nash W.E."/>
            <person name="Hallsworth-Pepin K."/>
            <person name="Wilson R.K."/>
            <person name="McClelland M."/>
            <person name="Forsythe S.J."/>
        </authorList>
    </citation>
    <scope>NUCLEOTIDE SEQUENCE [LARGE SCALE GENOMIC DNA]</scope>
    <source>
        <strain>ATCC BAA-894</strain>
    </source>
</reference>
<organism>
    <name type="scientific">Cronobacter sakazakii (strain ATCC BAA-894)</name>
    <name type="common">Enterobacter sakazakii</name>
    <dbReference type="NCBI Taxonomy" id="290339"/>
    <lineage>
        <taxon>Bacteria</taxon>
        <taxon>Pseudomonadati</taxon>
        <taxon>Pseudomonadota</taxon>
        <taxon>Gammaproteobacteria</taxon>
        <taxon>Enterobacterales</taxon>
        <taxon>Enterobacteriaceae</taxon>
        <taxon>Cronobacter</taxon>
    </lineage>
</organism>
<feature type="chain" id="PRO_0000315264" description="Isocitrate dehydrogenase kinase/phosphatase">
    <location>
        <begin position="1"/>
        <end position="596"/>
    </location>
</feature>
<feature type="active site" evidence="1">
    <location>
        <position position="372"/>
    </location>
</feature>
<feature type="binding site" evidence="1">
    <location>
        <begin position="316"/>
        <end position="322"/>
    </location>
    <ligand>
        <name>ATP</name>
        <dbReference type="ChEBI" id="CHEBI:30616"/>
    </ligand>
</feature>
<feature type="binding site" evidence="1">
    <location>
        <position position="337"/>
    </location>
    <ligand>
        <name>ATP</name>
        <dbReference type="ChEBI" id="CHEBI:30616"/>
    </ligand>
</feature>
<proteinExistence type="inferred from homology"/>
<comment type="function">
    <text evidence="1">Bifunctional enzyme which can phosphorylate or dephosphorylate isocitrate dehydrogenase (IDH) on a specific serine residue. This is a regulatory mechanism which enables bacteria to bypass the Krebs cycle via the glyoxylate shunt in response to the source of carbon. When bacteria are grown on glucose, IDH is fully active and unphosphorylated, but when grown on acetate or ethanol, the activity of IDH declines drastically concomitant with its phosphorylation.</text>
</comment>
<comment type="catalytic activity">
    <reaction evidence="1">
        <text>L-seryl-[isocitrate dehydrogenase] + ATP = O-phospho-L-seryl-[isocitrate dehydrogenase] + ADP + H(+)</text>
        <dbReference type="Rhea" id="RHEA:43540"/>
        <dbReference type="Rhea" id="RHEA-COMP:10605"/>
        <dbReference type="Rhea" id="RHEA-COMP:10606"/>
        <dbReference type="ChEBI" id="CHEBI:15378"/>
        <dbReference type="ChEBI" id="CHEBI:29999"/>
        <dbReference type="ChEBI" id="CHEBI:30616"/>
        <dbReference type="ChEBI" id="CHEBI:83421"/>
        <dbReference type="ChEBI" id="CHEBI:456216"/>
        <dbReference type="EC" id="2.7.11.5"/>
    </reaction>
</comment>
<comment type="subcellular location">
    <subcellularLocation>
        <location evidence="1">Cytoplasm</location>
    </subcellularLocation>
</comment>
<comment type="similarity">
    <text evidence="1">Belongs to the AceK family.</text>
</comment>